<proteinExistence type="inferred from homology"/>
<comment type="function">
    <text evidence="1">Binds directly to 23S ribosomal RNA and is necessary for the in vitro assembly process of the 50S ribosomal subunit. It is not involved in the protein synthesizing functions of that subunit.</text>
</comment>
<comment type="similarity">
    <text evidence="1">Belongs to the bacterial ribosomal protein bL20 family.</text>
</comment>
<feature type="chain" id="PRO_1000048913" description="Large ribosomal subunit protein bL20">
    <location>
        <begin position="1"/>
        <end position="120"/>
    </location>
</feature>
<gene>
    <name evidence="1" type="primary">rplT</name>
    <name type="ordered locus">Aave_2856</name>
</gene>
<organism>
    <name type="scientific">Paracidovorax citrulli (strain AAC00-1)</name>
    <name type="common">Acidovorax citrulli</name>
    <dbReference type="NCBI Taxonomy" id="397945"/>
    <lineage>
        <taxon>Bacteria</taxon>
        <taxon>Pseudomonadati</taxon>
        <taxon>Pseudomonadota</taxon>
        <taxon>Betaproteobacteria</taxon>
        <taxon>Burkholderiales</taxon>
        <taxon>Comamonadaceae</taxon>
        <taxon>Paracidovorax</taxon>
    </lineage>
</organism>
<keyword id="KW-0687">Ribonucleoprotein</keyword>
<keyword id="KW-0689">Ribosomal protein</keyword>
<keyword id="KW-0694">RNA-binding</keyword>
<keyword id="KW-0699">rRNA-binding</keyword>
<name>RL20_PARC0</name>
<dbReference type="EMBL" id="CP000512">
    <property type="protein sequence ID" value="ABM33424.1"/>
    <property type="molecule type" value="Genomic_DNA"/>
</dbReference>
<dbReference type="RefSeq" id="WP_011795945.1">
    <property type="nucleotide sequence ID" value="NC_008752.1"/>
</dbReference>
<dbReference type="SMR" id="A1TR36"/>
<dbReference type="STRING" id="397945.Aave_2856"/>
<dbReference type="GeneID" id="79792544"/>
<dbReference type="KEGG" id="aav:Aave_2856"/>
<dbReference type="eggNOG" id="COG0292">
    <property type="taxonomic scope" value="Bacteria"/>
</dbReference>
<dbReference type="HOGENOM" id="CLU_123265_0_1_4"/>
<dbReference type="OrthoDB" id="9808966at2"/>
<dbReference type="Proteomes" id="UP000002596">
    <property type="component" value="Chromosome"/>
</dbReference>
<dbReference type="GO" id="GO:1990904">
    <property type="term" value="C:ribonucleoprotein complex"/>
    <property type="evidence" value="ECO:0007669"/>
    <property type="project" value="UniProtKB-KW"/>
</dbReference>
<dbReference type="GO" id="GO:0005840">
    <property type="term" value="C:ribosome"/>
    <property type="evidence" value="ECO:0007669"/>
    <property type="project" value="UniProtKB-KW"/>
</dbReference>
<dbReference type="GO" id="GO:0019843">
    <property type="term" value="F:rRNA binding"/>
    <property type="evidence" value="ECO:0007669"/>
    <property type="project" value="UniProtKB-UniRule"/>
</dbReference>
<dbReference type="GO" id="GO:0003735">
    <property type="term" value="F:structural constituent of ribosome"/>
    <property type="evidence" value="ECO:0007669"/>
    <property type="project" value="InterPro"/>
</dbReference>
<dbReference type="GO" id="GO:0000027">
    <property type="term" value="P:ribosomal large subunit assembly"/>
    <property type="evidence" value="ECO:0007669"/>
    <property type="project" value="UniProtKB-UniRule"/>
</dbReference>
<dbReference type="GO" id="GO:0006412">
    <property type="term" value="P:translation"/>
    <property type="evidence" value="ECO:0007669"/>
    <property type="project" value="InterPro"/>
</dbReference>
<dbReference type="CDD" id="cd07026">
    <property type="entry name" value="Ribosomal_L20"/>
    <property type="match status" value="1"/>
</dbReference>
<dbReference type="FunFam" id="1.10.1900.20:FF:000001">
    <property type="entry name" value="50S ribosomal protein L20"/>
    <property type="match status" value="1"/>
</dbReference>
<dbReference type="Gene3D" id="6.10.160.10">
    <property type="match status" value="1"/>
</dbReference>
<dbReference type="Gene3D" id="1.10.1900.20">
    <property type="entry name" value="Ribosomal protein L20"/>
    <property type="match status" value="1"/>
</dbReference>
<dbReference type="HAMAP" id="MF_00382">
    <property type="entry name" value="Ribosomal_bL20"/>
    <property type="match status" value="1"/>
</dbReference>
<dbReference type="InterPro" id="IPR005813">
    <property type="entry name" value="Ribosomal_bL20"/>
</dbReference>
<dbReference type="InterPro" id="IPR049946">
    <property type="entry name" value="RIBOSOMAL_L20_CS"/>
</dbReference>
<dbReference type="InterPro" id="IPR035566">
    <property type="entry name" value="Ribosomal_protein_bL20_C"/>
</dbReference>
<dbReference type="NCBIfam" id="TIGR01032">
    <property type="entry name" value="rplT_bact"/>
    <property type="match status" value="1"/>
</dbReference>
<dbReference type="PANTHER" id="PTHR10986">
    <property type="entry name" value="39S RIBOSOMAL PROTEIN L20"/>
    <property type="match status" value="1"/>
</dbReference>
<dbReference type="Pfam" id="PF00453">
    <property type="entry name" value="Ribosomal_L20"/>
    <property type="match status" value="1"/>
</dbReference>
<dbReference type="PRINTS" id="PR00062">
    <property type="entry name" value="RIBOSOMALL20"/>
</dbReference>
<dbReference type="SUPFAM" id="SSF74731">
    <property type="entry name" value="Ribosomal protein L20"/>
    <property type="match status" value="1"/>
</dbReference>
<dbReference type="PROSITE" id="PS00937">
    <property type="entry name" value="RIBOSOMAL_L20"/>
    <property type="match status" value="1"/>
</dbReference>
<accession>A1TR36</accession>
<sequence>MPRVKRGVTARARHKKVLALSKGFRGRRGNVFRIAKQAVMKAGQYAYRDRRTKKRVFRQLWIARINAASRELGLTYSQFTNGLKKAAIEIDRKMLADLAVHDKAAFGSIVEQVKAKLAAA</sequence>
<evidence type="ECO:0000255" key="1">
    <source>
        <dbReference type="HAMAP-Rule" id="MF_00382"/>
    </source>
</evidence>
<evidence type="ECO:0000305" key="2"/>
<protein>
    <recommendedName>
        <fullName evidence="1">Large ribosomal subunit protein bL20</fullName>
    </recommendedName>
    <alternativeName>
        <fullName evidence="2">50S ribosomal protein L20</fullName>
    </alternativeName>
</protein>
<reference key="1">
    <citation type="submission" date="2006-12" db="EMBL/GenBank/DDBJ databases">
        <title>Complete sequence of Acidovorax avenae subsp. citrulli AAC00-1.</title>
        <authorList>
            <person name="Copeland A."/>
            <person name="Lucas S."/>
            <person name="Lapidus A."/>
            <person name="Barry K."/>
            <person name="Detter J.C."/>
            <person name="Glavina del Rio T."/>
            <person name="Dalin E."/>
            <person name="Tice H."/>
            <person name="Pitluck S."/>
            <person name="Kiss H."/>
            <person name="Brettin T."/>
            <person name="Bruce D."/>
            <person name="Han C."/>
            <person name="Tapia R."/>
            <person name="Gilna P."/>
            <person name="Schmutz J."/>
            <person name="Larimer F."/>
            <person name="Land M."/>
            <person name="Hauser L."/>
            <person name="Kyrpides N."/>
            <person name="Kim E."/>
            <person name="Stahl D."/>
            <person name="Richardson P."/>
        </authorList>
    </citation>
    <scope>NUCLEOTIDE SEQUENCE [LARGE SCALE GENOMIC DNA]</scope>
    <source>
        <strain>AAC00-1</strain>
    </source>
</reference>